<sequence length="218" mass="22667">MSLRSVLVAALAALAVATPVPENSLQERQLMSSNDVEDGVCRDVTFIFARGSTEQGNMGFVVGPEVCTSLKADLGSGKVACQGVGGAYTASLAPNFLSANTDPQSIQAATDLFEKAVANCPNTQIVAGGYSQGSAVMDNSIQALPADIQEKVKGVVLFGFTRNLQDNGQIPNYPKEDVKVYCALGDLVCSGTLIITPAHMTYGVNAGDAAQFLASKVQ</sequence>
<dbReference type="EC" id="3.1.1.74" evidence="5 6"/>
<dbReference type="EMBL" id="CH476599">
    <property type="protein sequence ID" value="EAU35238.1"/>
    <property type="status" value="ALT_INIT"/>
    <property type="molecule type" value="Genomic_DNA"/>
</dbReference>
<dbReference type="RefSeq" id="XP_001213969.1">
    <property type="nucleotide sequence ID" value="XM_001213969.1"/>
</dbReference>
<dbReference type="SMR" id="Q0CNE3"/>
<dbReference type="STRING" id="341663.Q0CNE3"/>
<dbReference type="ESTHER" id="asptn-cuti3">
    <property type="family name" value="Cutinase"/>
</dbReference>
<dbReference type="EnsemblFungi" id="EAU35238">
    <property type="protein sequence ID" value="EAU35238"/>
    <property type="gene ID" value="ATEG_04791"/>
</dbReference>
<dbReference type="GeneID" id="4320440"/>
<dbReference type="eggNOG" id="ENOG502SI38">
    <property type="taxonomic scope" value="Eukaryota"/>
</dbReference>
<dbReference type="OrthoDB" id="3225429at2759"/>
<dbReference type="Proteomes" id="UP000007963">
    <property type="component" value="Unassembled WGS sequence"/>
</dbReference>
<dbReference type="GO" id="GO:0005576">
    <property type="term" value="C:extracellular region"/>
    <property type="evidence" value="ECO:0007669"/>
    <property type="project" value="UniProtKB-SubCell"/>
</dbReference>
<dbReference type="GO" id="GO:0050525">
    <property type="term" value="F:cutinase activity"/>
    <property type="evidence" value="ECO:0000250"/>
    <property type="project" value="UniProtKB"/>
</dbReference>
<dbReference type="GO" id="GO:0016052">
    <property type="term" value="P:carbohydrate catabolic process"/>
    <property type="evidence" value="ECO:0007669"/>
    <property type="project" value="TreeGrafter"/>
</dbReference>
<dbReference type="FunFam" id="3.40.50.1820:FF:000235">
    <property type="entry name" value="Cutinase 1"/>
    <property type="match status" value="1"/>
</dbReference>
<dbReference type="Gene3D" id="3.40.50.1820">
    <property type="entry name" value="alpha/beta hydrolase"/>
    <property type="match status" value="1"/>
</dbReference>
<dbReference type="InterPro" id="IPR029058">
    <property type="entry name" value="AB_hydrolase_fold"/>
</dbReference>
<dbReference type="InterPro" id="IPR000675">
    <property type="entry name" value="Cutinase/axe"/>
</dbReference>
<dbReference type="InterPro" id="IPR043580">
    <property type="entry name" value="CUTINASE_1"/>
</dbReference>
<dbReference type="InterPro" id="IPR043579">
    <property type="entry name" value="CUTINASE_2"/>
</dbReference>
<dbReference type="InterPro" id="IPR011150">
    <property type="entry name" value="Cutinase_monf"/>
</dbReference>
<dbReference type="PANTHER" id="PTHR48250:SF3">
    <property type="entry name" value="CUTINASE 1-RELATED"/>
    <property type="match status" value="1"/>
</dbReference>
<dbReference type="PANTHER" id="PTHR48250">
    <property type="entry name" value="CUTINASE 2-RELATED"/>
    <property type="match status" value="1"/>
</dbReference>
<dbReference type="Pfam" id="PF01083">
    <property type="entry name" value="Cutinase"/>
    <property type="match status" value="1"/>
</dbReference>
<dbReference type="PRINTS" id="PR00129">
    <property type="entry name" value="CUTINASE"/>
</dbReference>
<dbReference type="SMART" id="SM01110">
    <property type="entry name" value="Cutinase"/>
    <property type="match status" value="1"/>
</dbReference>
<dbReference type="SUPFAM" id="SSF53474">
    <property type="entry name" value="alpha/beta-Hydrolases"/>
    <property type="match status" value="1"/>
</dbReference>
<dbReference type="PROSITE" id="PS00155">
    <property type="entry name" value="CUTINASE_1"/>
    <property type="match status" value="1"/>
</dbReference>
<dbReference type="PROSITE" id="PS00931">
    <property type="entry name" value="CUTINASE_2"/>
    <property type="match status" value="1"/>
</dbReference>
<organism>
    <name type="scientific">Aspergillus terreus (strain NIH 2624 / FGSC A1156)</name>
    <dbReference type="NCBI Taxonomy" id="341663"/>
    <lineage>
        <taxon>Eukaryota</taxon>
        <taxon>Fungi</taxon>
        <taxon>Dikarya</taxon>
        <taxon>Ascomycota</taxon>
        <taxon>Pezizomycotina</taxon>
        <taxon>Eurotiomycetes</taxon>
        <taxon>Eurotiomycetidae</taxon>
        <taxon>Eurotiales</taxon>
        <taxon>Aspergillaceae</taxon>
        <taxon>Aspergillus</taxon>
        <taxon>Aspergillus subgen. Circumdati</taxon>
    </lineage>
</organism>
<gene>
    <name type="ORF">ATEG_04791</name>
</gene>
<feature type="signal peptide" evidence="4">
    <location>
        <begin position="1"/>
        <end position="17"/>
    </location>
</feature>
<feature type="chain" id="PRO_0000395257" description="Probable cutinase 3">
    <location>
        <begin position="18"/>
        <end position="218"/>
    </location>
</feature>
<feature type="active site" description="Nucleophile" evidence="1">
    <location>
        <position position="131"/>
    </location>
</feature>
<feature type="active site" evidence="1">
    <location>
        <position position="186"/>
    </location>
</feature>
<feature type="active site" description="Proton donor/acceptor" evidence="1">
    <location>
        <position position="199"/>
    </location>
</feature>
<feature type="site" description="Transition state stabilizer" evidence="1">
    <location>
        <position position="52"/>
    </location>
</feature>
<feature type="site" description="Transition state stabilizer" evidence="1">
    <location>
        <position position="132"/>
    </location>
</feature>
<feature type="disulfide bond" evidence="3">
    <location>
        <begin position="41"/>
        <end position="120"/>
    </location>
</feature>
<feature type="disulfide bond" evidence="3">
    <location>
        <begin position="67"/>
        <end position="81"/>
    </location>
</feature>
<feature type="disulfide bond" evidence="3">
    <location>
        <begin position="182"/>
        <end position="189"/>
    </location>
</feature>
<keyword id="KW-1015">Disulfide bond</keyword>
<keyword id="KW-0378">Hydrolase</keyword>
<keyword id="KW-1185">Reference proteome</keyword>
<keyword id="KW-0964">Secreted</keyword>
<keyword id="KW-0719">Serine esterase</keyword>
<keyword id="KW-0732">Signal</keyword>
<proteinExistence type="inferred from homology"/>
<evidence type="ECO:0000250" key="1">
    <source>
        <dbReference type="UniProtKB" id="P00590"/>
    </source>
</evidence>
<evidence type="ECO:0000250" key="2">
    <source>
        <dbReference type="UniProtKB" id="P11373"/>
    </source>
</evidence>
<evidence type="ECO:0000250" key="3">
    <source>
        <dbReference type="UniProtKB" id="P52956"/>
    </source>
</evidence>
<evidence type="ECO:0000255" key="4"/>
<evidence type="ECO:0000255" key="5">
    <source>
        <dbReference type="PROSITE-ProRule" id="PRU10108"/>
    </source>
</evidence>
<evidence type="ECO:0000255" key="6">
    <source>
        <dbReference type="PROSITE-ProRule" id="PRU10109"/>
    </source>
</evidence>
<evidence type="ECO:0000305" key="7"/>
<accession>Q0CNE3</accession>
<protein>
    <recommendedName>
        <fullName>Probable cutinase 3</fullName>
        <ecNumber evidence="5 6">3.1.1.74</ecNumber>
    </recommendedName>
    <alternativeName>
        <fullName>Cutin hydrolase 3</fullName>
    </alternativeName>
</protein>
<reference key="1">
    <citation type="submission" date="2005-09" db="EMBL/GenBank/DDBJ databases">
        <title>Annotation of the Aspergillus terreus NIH2624 genome.</title>
        <authorList>
            <person name="Birren B.W."/>
            <person name="Lander E.S."/>
            <person name="Galagan J.E."/>
            <person name="Nusbaum C."/>
            <person name="Devon K."/>
            <person name="Henn M."/>
            <person name="Ma L.-J."/>
            <person name="Jaffe D.B."/>
            <person name="Butler J."/>
            <person name="Alvarez P."/>
            <person name="Gnerre S."/>
            <person name="Grabherr M."/>
            <person name="Kleber M."/>
            <person name="Mauceli E.W."/>
            <person name="Brockman W."/>
            <person name="Rounsley S."/>
            <person name="Young S.K."/>
            <person name="LaButti K."/>
            <person name="Pushparaj V."/>
            <person name="DeCaprio D."/>
            <person name="Crawford M."/>
            <person name="Koehrsen M."/>
            <person name="Engels R."/>
            <person name="Montgomery P."/>
            <person name="Pearson M."/>
            <person name="Howarth C."/>
            <person name="Larson L."/>
            <person name="Luoma S."/>
            <person name="White J."/>
            <person name="Alvarado L."/>
            <person name="Kodira C.D."/>
            <person name="Zeng Q."/>
            <person name="Oleary S."/>
            <person name="Yandava C."/>
            <person name="Denning D.W."/>
            <person name="Nierman W.C."/>
            <person name="Milne T."/>
            <person name="Madden K."/>
        </authorList>
    </citation>
    <scope>NUCLEOTIDE SEQUENCE [LARGE SCALE GENOMIC DNA]</scope>
    <source>
        <strain>NIH 2624 / FGSC A1156</strain>
    </source>
</reference>
<comment type="function">
    <text evidence="1">Catalyzes the hydrolysis of complex carboxylic polyesters found in the cell wall of plants (By similarity). Degrades cutin, a macromolecule that forms the structure of the plant cuticle (By similarity).</text>
</comment>
<comment type="catalytic activity">
    <reaction evidence="5 6">
        <text>cutin + H2O = cutin monomers.</text>
        <dbReference type="EC" id="3.1.1.74"/>
    </reaction>
</comment>
<comment type="subcellular location">
    <subcellularLocation>
        <location evidence="2">Secreted</location>
    </subcellularLocation>
</comment>
<comment type="similarity">
    <text evidence="7">Belongs to the cutinase family.</text>
</comment>
<comment type="sequence caution" evidence="7">
    <conflict type="erroneous initiation">
        <sequence resource="EMBL-CDS" id="EAU35238"/>
    </conflict>
    <text>Extended N-terminus.</text>
</comment>
<name>CUTI3_ASPTN</name>